<comment type="function">
    <text evidence="1">Cell wall formation. Catalyzes the addition of glutamate to the nucleotide precursor UDP-N-acetylmuramoyl-L-alanine (UMA).</text>
</comment>
<comment type="catalytic activity">
    <reaction evidence="1">
        <text>UDP-N-acetyl-alpha-D-muramoyl-L-alanine + D-glutamate + ATP = UDP-N-acetyl-alpha-D-muramoyl-L-alanyl-D-glutamate + ADP + phosphate + H(+)</text>
        <dbReference type="Rhea" id="RHEA:16429"/>
        <dbReference type="ChEBI" id="CHEBI:15378"/>
        <dbReference type="ChEBI" id="CHEBI:29986"/>
        <dbReference type="ChEBI" id="CHEBI:30616"/>
        <dbReference type="ChEBI" id="CHEBI:43474"/>
        <dbReference type="ChEBI" id="CHEBI:83898"/>
        <dbReference type="ChEBI" id="CHEBI:83900"/>
        <dbReference type="ChEBI" id="CHEBI:456216"/>
        <dbReference type="EC" id="6.3.2.9"/>
    </reaction>
</comment>
<comment type="pathway">
    <text evidence="1">Cell wall biogenesis; peptidoglycan biosynthesis.</text>
</comment>
<comment type="subcellular location">
    <subcellularLocation>
        <location evidence="1">Cytoplasm</location>
    </subcellularLocation>
</comment>
<comment type="similarity">
    <text evidence="1">Belongs to the MurCDEF family.</text>
</comment>
<reference key="1">
    <citation type="journal article" date="2006" name="Proc. Natl. Acad. Sci. U.S.A.">
        <title>Comparative genomics of the lactic acid bacteria.</title>
        <authorList>
            <person name="Makarova K.S."/>
            <person name="Slesarev A."/>
            <person name="Wolf Y.I."/>
            <person name="Sorokin A."/>
            <person name="Mirkin B."/>
            <person name="Koonin E.V."/>
            <person name="Pavlov A."/>
            <person name="Pavlova N."/>
            <person name="Karamychev V."/>
            <person name="Polouchine N."/>
            <person name="Shakhova V."/>
            <person name="Grigoriev I."/>
            <person name="Lou Y."/>
            <person name="Rohksar D."/>
            <person name="Lucas S."/>
            <person name="Huang K."/>
            <person name="Goodstein D.M."/>
            <person name="Hawkins T."/>
            <person name="Plengvidhya V."/>
            <person name="Welker D."/>
            <person name="Hughes J."/>
            <person name="Goh Y."/>
            <person name="Benson A."/>
            <person name="Baldwin K."/>
            <person name="Lee J.-H."/>
            <person name="Diaz-Muniz I."/>
            <person name="Dosti B."/>
            <person name="Smeianov V."/>
            <person name="Wechter W."/>
            <person name="Barabote R."/>
            <person name="Lorca G."/>
            <person name="Altermann E."/>
            <person name="Barrangou R."/>
            <person name="Ganesan B."/>
            <person name="Xie Y."/>
            <person name="Rawsthorne H."/>
            <person name="Tamir D."/>
            <person name="Parker C."/>
            <person name="Breidt F."/>
            <person name="Broadbent J.R."/>
            <person name="Hutkins R."/>
            <person name="O'Sullivan D."/>
            <person name="Steele J."/>
            <person name="Unlu G."/>
            <person name="Saier M.H. Jr."/>
            <person name="Klaenhammer T."/>
            <person name="Richardson P."/>
            <person name="Kozyavkin S."/>
            <person name="Weimer B.C."/>
            <person name="Mills D.A."/>
        </authorList>
    </citation>
    <scope>NUCLEOTIDE SEQUENCE [LARGE SCALE GENOMIC DNA]</scope>
    <source>
        <strain>ATCC 33323 / DSM 20243 / BCRC 14619 / CIP 102991 / JCM 1131 / KCTC 3163 / NCIMB 11718 / NCTC 13722 / AM63</strain>
    </source>
</reference>
<accession>Q042P8</accession>
<sequence>MKKIKTYENKNILILGLGKSGFSVAKLLLKLGAKLTLNDKKDLSNDDRAAELDKLGVRIISGYHPVEIFDKEKFDYLVKNPGIPYENPMVEKALKLNIPVITEPEIALNVSEAPYVCVTGSNGKTTTVMLTQRIMDHHLSKNGGHAYAVGNIGVPISEVVEKATDKDLLVVEMSSFQLLGVTDIKPKVAAIVDIYNNVHLDYHKTFDNYVEAKLRITQSQDQNDYFIANFDQKNILDRELKKTKAKVQTFSETDKTADYFIGDEYLESKDDHQIMKISDIKIPGIHNQQNCLVAIAISKLMGADDSDIQYALSTFTGATHRLQYVMTYNDRKIYNDSKSTNIEAATVAIPSFKEPEVLIAGGLDRGFMFDSLVPLFKKYVKSIVLYGETKYLLADAARKAGIKDIVIVNTLQEAVPRAYELSEAGDVILFSPACASWDQFNTFEERGDFFVKFIKELKTK</sequence>
<name>MURD_LACGA</name>
<keyword id="KW-0067">ATP-binding</keyword>
<keyword id="KW-0131">Cell cycle</keyword>
<keyword id="KW-0132">Cell division</keyword>
<keyword id="KW-0133">Cell shape</keyword>
<keyword id="KW-0961">Cell wall biogenesis/degradation</keyword>
<keyword id="KW-0963">Cytoplasm</keyword>
<keyword id="KW-0436">Ligase</keyword>
<keyword id="KW-0547">Nucleotide-binding</keyword>
<keyword id="KW-0573">Peptidoglycan synthesis</keyword>
<evidence type="ECO:0000255" key="1">
    <source>
        <dbReference type="HAMAP-Rule" id="MF_00639"/>
    </source>
</evidence>
<organism>
    <name type="scientific">Lactobacillus gasseri (strain ATCC 33323 / DSM 20243 / BCRC 14619 / CIP 102991 / JCM 1131 / KCTC 3163 / NCIMB 11718 / NCTC 13722 / AM63)</name>
    <dbReference type="NCBI Taxonomy" id="324831"/>
    <lineage>
        <taxon>Bacteria</taxon>
        <taxon>Bacillati</taxon>
        <taxon>Bacillota</taxon>
        <taxon>Bacilli</taxon>
        <taxon>Lactobacillales</taxon>
        <taxon>Lactobacillaceae</taxon>
        <taxon>Lactobacillus</taxon>
    </lineage>
</organism>
<gene>
    <name evidence="1" type="primary">murD</name>
    <name type="ordered locus">LGAS_1205</name>
</gene>
<proteinExistence type="inferred from homology"/>
<feature type="chain" id="PRO_0000301431" description="UDP-N-acetylmuramoylalanine--D-glutamate ligase">
    <location>
        <begin position="1"/>
        <end position="460"/>
    </location>
</feature>
<feature type="binding site" evidence="1">
    <location>
        <begin position="120"/>
        <end position="126"/>
    </location>
    <ligand>
        <name>ATP</name>
        <dbReference type="ChEBI" id="CHEBI:30616"/>
    </ligand>
</feature>
<protein>
    <recommendedName>
        <fullName evidence="1">UDP-N-acetylmuramoylalanine--D-glutamate ligase</fullName>
        <ecNumber evidence="1">6.3.2.9</ecNumber>
    </recommendedName>
    <alternativeName>
        <fullName evidence="1">D-glutamic acid-adding enzyme</fullName>
    </alternativeName>
    <alternativeName>
        <fullName evidence="1">UDP-N-acetylmuramoyl-L-alanyl-D-glutamate synthetase</fullName>
    </alternativeName>
</protein>
<dbReference type="EC" id="6.3.2.9" evidence="1"/>
<dbReference type="EMBL" id="CP000413">
    <property type="protein sequence ID" value="ABJ60574.1"/>
    <property type="molecule type" value="Genomic_DNA"/>
</dbReference>
<dbReference type="RefSeq" id="WP_003647101.1">
    <property type="nucleotide sequence ID" value="NZ_WBMG01000002.1"/>
</dbReference>
<dbReference type="SMR" id="Q042P8"/>
<dbReference type="GeneID" id="29639101"/>
<dbReference type="KEGG" id="lga:LGAS_1205"/>
<dbReference type="HOGENOM" id="CLU_032540_0_1_9"/>
<dbReference type="BioCyc" id="LGAS324831:G1G6Y-1201-MONOMER"/>
<dbReference type="UniPathway" id="UPA00219"/>
<dbReference type="Proteomes" id="UP000000664">
    <property type="component" value="Chromosome"/>
</dbReference>
<dbReference type="GO" id="GO:0005737">
    <property type="term" value="C:cytoplasm"/>
    <property type="evidence" value="ECO:0007669"/>
    <property type="project" value="UniProtKB-SubCell"/>
</dbReference>
<dbReference type="GO" id="GO:0005524">
    <property type="term" value="F:ATP binding"/>
    <property type="evidence" value="ECO:0007669"/>
    <property type="project" value="UniProtKB-UniRule"/>
</dbReference>
<dbReference type="GO" id="GO:0008764">
    <property type="term" value="F:UDP-N-acetylmuramoylalanine-D-glutamate ligase activity"/>
    <property type="evidence" value="ECO:0007669"/>
    <property type="project" value="UniProtKB-UniRule"/>
</dbReference>
<dbReference type="GO" id="GO:0051301">
    <property type="term" value="P:cell division"/>
    <property type="evidence" value="ECO:0007669"/>
    <property type="project" value="UniProtKB-KW"/>
</dbReference>
<dbReference type="GO" id="GO:0071555">
    <property type="term" value="P:cell wall organization"/>
    <property type="evidence" value="ECO:0007669"/>
    <property type="project" value="UniProtKB-KW"/>
</dbReference>
<dbReference type="GO" id="GO:0009252">
    <property type="term" value="P:peptidoglycan biosynthetic process"/>
    <property type="evidence" value="ECO:0007669"/>
    <property type="project" value="UniProtKB-UniRule"/>
</dbReference>
<dbReference type="GO" id="GO:0008360">
    <property type="term" value="P:regulation of cell shape"/>
    <property type="evidence" value="ECO:0007669"/>
    <property type="project" value="UniProtKB-KW"/>
</dbReference>
<dbReference type="Gene3D" id="3.90.190.20">
    <property type="entry name" value="Mur ligase, C-terminal domain"/>
    <property type="match status" value="1"/>
</dbReference>
<dbReference type="Gene3D" id="3.40.1190.10">
    <property type="entry name" value="Mur-like, catalytic domain"/>
    <property type="match status" value="1"/>
</dbReference>
<dbReference type="Gene3D" id="3.40.50.720">
    <property type="entry name" value="NAD(P)-binding Rossmann-like Domain"/>
    <property type="match status" value="1"/>
</dbReference>
<dbReference type="HAMAP" id="MF_00639">
    <property type="entry name" value="MurD"/>
    <property type="match status" value="1"/>
</dbReference>
<dbReference type="InterPro" id="IPR036565">
    <property type="entry name" value="Mur-like_cat_sf"/>
</dbReference>
<dbReference type="InterPro" id="IPR004101">
    <property type="entry name" value="Mur_ligase_C"/>
</dbReference>
<dbReference type="InterPro" id="IPR036615">
    <property type="entry name" value="Mur_ligase_C_dom_sf"/>
</dbReference>
<dbReference type="InterPro" id="IPR013221">
    <property type="entry name" value="Mur_ligase_cen"/>
</dbReference>
<dbReference type="InterPro" id="IPR005762">
    <property type="entry name" value="MurD"/>
</dbReference>
<dbReference type="NCBIfam" id="TIGR01087">
    <property type="entry name" value="murD"/>
    <property type="match status" value="1"/>
</dbReference>
<dbReference type="PANTHER" id="PTHR43692">
    <property type="entry name" value="UDP-N-ACETYLMURAMOYLALANINE--D-GLUTAMATE LIGASE"/>
    <property type="match status" value="1"/>
</dbReference>
<dbReference type="PANTHER" id="PTHR43692:SF1">
    <property type="entry name" value="UDP-N-ACETYLMURAMOYLALANINE--D-GLUTAMATE LIGASE"/>
    <property type="match status" value="1"/>
</dbReference>
<dbReference type="Pfam" id="PF02875">
    <property type="entry name" value="Mur_ligase_C"/>
    <property type="match status" value="1"/>
</dbReference>
<dbReference type="Pfam" id="PF08245">
    <property type="entry name" value="Mur_ligase_M"/>
    <property type="match status" value="1"/>
</dbReference>
<dbReference type="Pfam" id="PF21799">
    <property type="entry name" value="MurD-like_N"/>
    <property type="match status" value="1"/>
</dbReference>
<dbReference type="SUPFAM" id="SSF51984">
    <property type="entry name" value="MurCD N-terminal domain"/>
    <property type="match status" value="1"/>
</dbReference>
<dbReference type="SUPFAM" id="SSF53623">
    <property type="entry name" value="MurD-like peptide ligases, catalytic domain"/>
    <property type="match status" value="1"/>
</dbReference>
<dbReference type="SUPFAM" id="SSF53244">
    <property type="entry name" value="MurD-like peptide ligases, peptide-binding domain"/>
    <property type="match status" value="1"/>
</dbReference>